<proteinExistence type="inferred from homology"/>
<organism>
    <name type="scientific">Salmonella typhi</name>
    <dbReference type="NCBI Taxonomy" id="90370"/>
    <lineage>
        <taxon>Bacteria</taxon>
        <taxon>Pseudomonadati</taxon>
        <taxon>Pseudomonadota</taxon>
        <taxon>Gammaproteobacteria</taxon>
        <taxon>Enterobacterales</taxon>
        <taxon>Enterobacteriaceae</taxon>
        <taxon>Salmonella</taxon>
    </lineage>
</organism>
<accession>P0A2E2</accession>
<accession>P06192</accession>
<dbReference type="EC" id="2.1.2.1" evidence="1"/>
<dbReference type="EMBL" id="AL513382">
    <property type="protein sequence ID" value="CAD02758.1"/>
    <property type="molecule type" value="Genomic_DNA"/>
</dbReference>
<dbReference type="EMBL" id="AE014613">
    <property type="protein sequence ID" value="AAO68026.1"/>
    <property type="molecule type" value="Genomic_DNA"/>
</dbReference>
<dbReference type="RefSeq" id="NP_457085.1">
    <property type="nucleotide sequence ID" value="NC_003198.1"/>
</dbReference>
<dbReference type="SMR" id="P0A2E2"/>
<dbReference type="STRING" id="220341.gene:17586692"/>
<dbReference type="KEGG" id="stt:t0301"/>
<dbReference type="KEGG" id="sty:STY2802"/>
<dbReference type="PATRIC" id="fig|220341.7.peg.2848"/>
<dbReference type="eggNOG" id="COG0112">
    <property type="taxonomic scope" value="Bacteria"/>
</dbReference>
<dbReference type="HOGENOM" id="CLU_022477_2_1_6"/>
<dbReference type="OMA" id="CATTHKV"/>
<dbReference type="OrthoDB" id="9803846at2"/>
<dbReference type="UniPathway" id="UPA00193"/>
<dbReference type="UniPathway" id="UPA00288">
    <property type="reaction ID" value="UER01023"/>
</dbReference>
<dbReference type="Proteomes" id="UP000000541">
    <property type="component" value="Chromosome"/>
</dbReference>
<dbReference type="Proteomes" id="UP000002670">
    <property type="component" value="Chromosome"/>
</dbReference>
<dbReference type="GO" id="GO:0005829">
    <property type="term" value="C:cytosol"/>
    <property type="evidence" value="ECO:0007669"/>
    <property type="project" value="TreeGrafter"/>
</dbReference>
<dbReference type="GO" id="GO:0004372">
    <property type="term" value="F:glycine hydroxymethyltransferase activity"/>
    <property type="evidence" value="ECO:0007669"/>
    <property type="project" value="UniProtKB-UniRule"/>
</dbReference>
<dbReference type="GO" id="GO:0030170">
    <property type="term" value="F:pyridoxal phosphate binding"/>
    <property type="evidence" value="ECO:0007669"/>
    <property type="project" value="UniProtKB-UniRule"/>
</dbReference>
<dbReference type="GO" id="GO:0019264">
    <property type="term" value="P:glycine biosynthetic process from serine"/>
    <property type="evidence" value="ECO:0007669"/>
    <property type="project" value="UniProtKB-UniRule"/>
</dbReference>
<dbReference type="GO" id="GO:0035999">
    <property type="term" value="P:tetrahydrofolate interconversion"/>
    <property type="evidence" value="ECO:0007669"/>
    <property type="project" value="UniProtKB-UniRule"/>
</dbReference>
<dbReference type="CDD" id="cd00378">
    <property type="entry name" value="SHMT"/>
    <property type="match status" value="1"/>
</dbReference>
<dbReference type="FunFam" id="3.40.640.10:FF:000001">
    <property type="entry name" value="Serine hydroxymethyltransferase"/>
    <property type="match status" value="1"/>
</dbReference>
<dbReference type="FunFam" id="3.90.1150.10:FF:000003">
    <property type="entry name" value="Serine hydroxymethyltransferase"/>
    <property type="match status" value="1"/>
</dbReference>
<dbReference type="Gene3D" id="3.90.1150.10">
    <property type="entry name" value="Aspartate Aminotransferase, domain 1"/>
    <property type="match status" value="1"/>
</dbReference>
<dbReference type="Gene3D" id="3.40.640.10">
    <property type="entry name" value="Type I PLP-dependent aspartate aminotransferase-like (Major domain)"/>
    <property type="match status" value="1"/>
</dbReference>
<dbReference type="HAMAP" id="MF_00051">
    <property type="entry name" value="SHMT"/>
    <property type="match status" value="1"/>
</dbReference>
<dbReference type="InterPro" id="IPR015424">
    <property type="entry name" value="PyrdxlP-dep_Trfase"/>
</dbReference>
<dbReference type="InterPro" id="IPR015421">
    <property type="entry name" value="PyrdxlP-dep_Trfase_major"/>
</dbReference>
<dbReference type="InterPro" id="IPR015422">
    <property type="entry name" value="PyrdxlP-dep_Trfase_small"/>
</dbReference>
<dbReference type="InterPro" id="IPR001085">
    <property type="entry name" value="Ser_HO-MeTrfase"/>
</dbReference>
<dbReference type="InterPro" id="IPR049943">
    <property type="entry name" value="Ser_HO-MeTrfase-like"/>
</dbReference>
<dbReference type="InterPro" id="IPR019798">
    <property type="entry name" value="Ser_HO-MeTrfase_PLP_BS"/>
</dbReference>
<dbReference type="InterPro" id="IPR039429">
    <property type="entry name" value="SHMT-like_dom"/>
</dbReference>
<dbReference type="NCBIfam" id="NF000586">
    <property type="entry name" value="PRK00011.1"/>
    <property type="match status" value="1"/>
</dbReference>
<dbReference type="PANTHER" id="PTHR11680">
    <property type="entry name" value="SERINE HYDROXYMETHYLTRANSFERASE"/>
    <property type="match status" value="1"/>
</dbReference>
<dbReference type="PANTHER" id="PTHR11680:SF50">
    <property type="entry name" value="SERINE HYDROXYMETHYLTRANSFERASE"/>
    <property type="match status" value="1"/>
</dbReference>
<dbReference type="Pfam" id="PF00464">
    <property type="entry name" value="SHMT"/>
    <property type="match status" value="1"/>
</dbReference>
<dbReference type="PIRSF" id="PIRSF000412">
    <property type="entry name" value="SHMT"/>
    <property type="match status" value="1"/>
</dbReference>
<dbReference type="SUPFAM" id="SSF53383">
    <property type="entry name" value="PLP-dependent transferases"/>
    <property type="match status" value="1"/>
</dbReference>
<dbReference type="PROSITE" id="PS00096">
    <property type="entry name" value="SHMT"/>
    <property type="match status" value="1"/>
</dbReference>
<keyword id="KW-0028">Amino-acid biosynthesis</keyword>
<keyword id="KW-0963">Cytoplasm</keyword>
<keyword id="KW-0554">One-carbon metabolism</keyword>
<keyword id="KW-0663">Pyridoxal phosphate</keyword>
<keyword id="KW-0808">Transferase</keyword>
<protein>
    <recommendedName>
        <fullName evidence="1">Serine hydroxymethyltransferase 1</fullName>
        <shortName evidence="1">SHMT 1</shortName>
        <shortName evidence="1">Serine methylase 1</shortName>
        <ecNumber evidence="1">2.1.2.1</ecNumber>
    </recommendedName>
</protein>
<comment type="function">
    <text evidence="1">Catalyzes the reversible interconversion of serine and glycine with tetrahydrofolate (THF) serving as the one-carbon carrier. This reaction serves as the major source of one-carbon groups required for the biosynthesis of purines, thymidylate, methionine, and other important biomolecules. Also exhibits THF-independent aldolase activity toward beta-hydroxyamino acids, producing glycine and aldehydes, via a retro-aldol mechanism.</text>
</comment>
<comment type="catalytic activity">
    <reaction evidence="1">
        <text>(6R)-5,10-methylene-5,6,7,8-tetrahydrofolate + glycine + H2O = (6S)-5,6,7,8-tetrahydrofolate + L-serine</text>
        <dbReference type="Rhea" id="RHEA:15481"/>
        <dbReference type="ChEBI" id="CHEBI:15377"/>
        <dbReference type="ChEBI" id="CHEBI:15636"/>
        <dbReference type="ChEBI" id="CHEBI:33384"/>
        <dbReference type="ChEBI" id="CHEBI:57305"/>
        <dbReference type="ChEBI" id="CHEBI:57453"/>
        <dbReference type="EC" id="2.1.2.1"/>
    </reaction>
</comment>
<comment type="cofactor">
    <cofactor evidence="1">
        <name>pyridoxal 5'-phosphate</name>
        <dbReference type="ChEBI" id="CHEBI:597326"/>
    </cofactor>
</comment>
<comment type="pathway">
    <text evidence="1">One-carbon metabolism; tetrahydrofolate interconversion.</text>
</comment>
<comment type="pathway">
    <text evidence="1">Amino-acid biosynthesis; glycine biosynthesis; glycine from L-serine: step 1/1.</text>
</comment>
<comment type="subunit">
    <text evidence="1">Homodimer.</text>
</comment>
<comment type="subcellular location">
    <subcellularLocation>
        <location evidence="1">Cytoplasm</location>
    </subcellularLocation>
</comment>
<comment type="similarity">
    <text evidence="1">Belongs to the SHMT family.</text>
</comment>
<evidence type="ECO:0000255" key="1">
    <source>
        <dbReference type="HAMAP-Rule" id="MF_00051"/>
    </source>
</evidence>
<feature type="chain" id="PRO_0000113656" description="Serine hydroxymethyltransferase 1">
    <location>
        <begin position="1"/>
        <end position="417"/>
    </location>
</feature>
<feature type="binding site" evidence="1">
    <location>
        <position position="121"/>
    </location>
    <ligand>
        <name>(6S)-5,6,7,8-tetrahydrofolate</name>
        <dbReference type="ChEBI" id="CHEBI:57453"/>
    </ligand>
</feature>
<feature type="binding site" evidence="1">
    <location>
        <begin position="125"/>
        <end position="127"/>
    </location>
    <ligand>
        <name>(6S)-5,6,7,8-tetrahydrofolate</name>
        <dbReference type="ChEBI" id="CHEBI:57453"/>
    </ligand>
</feature>
<feature type="binding site" evidence="1">
    <location>
        <begin position="355"/>
        <end position="357"/>
    </location>
    <ligand>
        <name>(6S)-5,6,7,8-tetrahydrofolate</name>
        <dbReference type="ChEBI" id="CHEBI:57453"/>
    </ligand>
</feature>
<feature type="site" description="Plays an important role in substrate specificity" evidence="1">
    <location>
        <position position="228"/>
    </location>
</feature>
<feature type="modified residue" description="N6-(pyridoxal phosphate)lysine" evidence="1">
    <location>
        <position position="229"/>
    </location>
</feature>
<gene>
    <name evidence="1" type="primary">glyA1</name>
    <name type="ordered locus">STY2802</name>
    <name type="ordered locus">t0301</name>
</gene>
<sequence length="417" mass="45455">MLKREMNIADYDAELWQAMEQEKVRQEEHIELIASENYTSPRVMQAQGSQLTNKYAEGYPGKRYYGGCEYVDVVEQLAIDRAKELFGADYANVQPHSGSQANFAVYTALLQPGDTVLGMNLAQGGHLTHGSPVNFSGKLYNIVPYGIDESGKIDYDEMAKLAKEHKPKMIIGGFSAYSGVVDWAKMREIADSIGAYLFVDMAHVAGLIAAGVYPNPVPHAHVVTTTTHKTLAGPRGGLILAKGGDEELYKKLNSAVFPSAQGGPLMHVIAGKAVALKEAMEPEFKVYQQQVAKNAKAMVEVFLNRGYKVVSGGTENHLFLLDLVDKNLTGKEADAALGRANITVNKNSVPNDPKSPFVTSGIRIGSPAVTRRGFKEAEVKELAGWMCDVLDNINDEATIERVKAKVLDICARFPVYA</sequence>
<reference key="1">
    <citation type="journal article" date="2001" name="Nature">
        <title>Complete genome sequence of a multiple drug resistant Salmonella enterica serovar Typhi CT18.</title>
        <authorList>
            <person name="Parkhill J."/>
            <person name="Dougan G."/>
            <person name="James K.D."/>
            <person name="Thomson N.R."/>
            <person name="Pickard D."/>
            <person name="Wain J."/>
            <person name="Churcher C.M."/>
            <person name="Mungall K.L."/>
            <person name="Bentley S.D."/>
            <person name="Holden M.T.G."/>
            <person name="Sebaihia M."/>
            <person name="Baker S."/>
            <person name="Basham D."/>
            <person name="Brooks K."/>
            <person name="Chillingworth T."/>
            <person name="Connerton P."/>
            <person name="Cronin A."/>
            <person name="Davis P."/>
            <person name="Davies R.M."/>
            <person name="Dowd L."/>
            <person name="White N."/>
            <person name="Farrar J."/>
            <person name="Feltwell T."/>
            <person name="Hamlin N."/>
            <person name="Haque A."/>
            <person name="Hien T.T."/>
            <person name="Holroyd S."/>
            <person name="Jagels K."/>
            <person name="Krogh A."/>
            <person name="Larsen T.S."/>
            <person name="Leather S."/>
            <person name="Moule S."/>
            <person name="O'Gaora P."/>
            <person name="Parry C."/>
            <person name="Quail M.A."/>
            <person name="Rutherford K.M."/>
            <person name="Simmonds M."/>
            <person name="Skelton J."/>
            <person name="Stevens K."/>
            <person name="Whitehead S."/>
            <person name="Barrell B.G."/>
        </authorList>
    </citation>
    <scope>NUCLEOTIDE SEQUENCE [LARGE SCALE GENOMIC DNA]</scope>
    <source>
        <strain>CT18</strain>
    </source>
</reference>
<reference key="2">
    <citation type="journal article" date="2003" name="J. Bacteriol.">
        <title>Comparative genomics of Salmonella enterica serovar Typhi strains Ty2 and CT18.</title>
        <authorList>
            <person name="Deng W."/>
            <person name="Liou S.-R."/>
            <person name="Plunkett G. III"/>
            <person name="Mayhew G.F."/>
            <person name="Rose D.J."/>
            <person name="Burland V."/>
            <person name="Kodoyianni V."/>
            <person name="Schwartz D.C."/>
            <person name="Blattner F.R."/>
        </authorList>
    </citation>
    <scope>NUCLEOTIDE SEQUENCE [LARGE SCALE GENOMIC DNA]</scope>
    <source>
        <strain>ATCC 700931 / Ty2</strain>
    </source>
</reference>
<name>GLYA1_SALTI</name>